<proteinExistence type="evidence at transcript level"/>
<dbReference type="EC" id="1.17.4.1"/>
<dbReference type="EMBL" id="X68127">
    <property type="protein sequence ID" value="CAA48232.1"/>
    <property type="molecule type" value="mRNA"/>
</dbReference>
<dbReference type="PIR" id="S27153">
    <property type="entry name" value="S27153"/>
</dbReference>
<dbReference type="SMR" id="Q60561"/>
<dbReference type="STRING" id="10036.ENSMAUP00000020705"/>
<dbReference type="eggNOG" id="KOG1567">
    <property type="taxonomic scope" value="Eukaryota"/>
</dbReference>
<dbReference type="Proteomes" id="UP000189706">
    <property type="component" value="Unplaced"/>
</dbReference>
<dbReference type="GO" id="GO:0005829">
    <property type="term" value="C:cytosol"/>
    <property type="evidence" value="ECO:0007669"/>
    <property type="project" value="TreeGrafter"/>
</dbReference>
<dbReference type="GO" id="GO:0005634">
    <property type="term" value="C:nucleus"/>
    <property type="evidence" value="ECO:0007669"/>
    <property type="project" value="UniProtKB-SubCell"/>
</dbReference>
<dbReference type="GO" id="GO:0046872">
    <property type="term" value="F:metal ion binding"/>
    <property type="evidence" value="ECO:0007669"/>
    <property type="project" value="UniProtKB-KW"/>
</dbReference>
<dbReference type="GO" id="GO:0004748">
    <property type="term" value="F:ribonucleoside-diphosphate reductase activity, thioredoxin disulfide as acceptor"/>
    <property type="evidence" value="ECO:0000250"/>
    <property type="project" value="UniProtKB"/>
</dbReference>
<dbReference type="GO" id="GO:0009263">
    <property type="term" value="P:deoxyribonucleotide biosynthetic process"/>
    <property type="evidence" value="ECO:0000250"/>
    <property type="project" value="UniProtKB"/>
</dbReference>
<dbReference type="CDD" id="cd01049">
    <property type="entry name" value="RNRR2"/>
    <property type="match status" value="1"/>
</dbReference>
<dbReference type="FunFam" id="1.10.620.20:FF:000004">
    <property type="entry name" value="Ribonucleoside-diphosphate reductase subunit M2 B"/>
    <property type="match status" value="1"/>
</dbReference>
<dbReference type="Gene3D" id="1.10.620.20">
    <property type="entry name" value="Ribonucleotide Reductase, subunit A"/>
    <property type="match status" value="1"/>
</dbReference>
<dbReference type="InterPro" id="IPR009078">
    <property type="entry name" value="Ferritin-like_SF"/>
</dbReference>
<dbReference type="InterPro" id="IPR012348">
    <property type="entry name" value="RNR-like"/>
</dbReference>
<dbReference type="InterPro" id="IPR033909">
    <property type="entry name" value="RNR_small"/>
</dbReference>
<dbReference type="InterPro" id="IPR030475">
    <property type="entry name" value="RNR_small_AS"/>
</dbReference>
<dbReference type="InterPro" id="IPR000358">
    <property type="entry name" value="RNR_small_fam"/>
</dbReference>
<dbReference type="PANTHER" id="PTHR23409">
    <property type="entry name" value="RIBONUCLEOSIDE-DIPHOSPHATE REDUCTASE SMALL CHAIN"/>
    <property type="match status" value="1"/>
</dbReference>
<dbReference type="PANTHER" id="PTHR23409:SF20">
    <property type="entry name" value="RIBONUCLEOSIDE-DIPHOSPHATE REDUCTASE SUBUNIT M2"/>
    <property type="match status" value="1"/>
</dbReference>
<dbReference type="Pfam" id="PF00268">
    <property type="entry name" value="Ribonuc_red_sm"/>
    <property type="match status" value="1"/>
</dbReference>
<dbReference type="SUPFAM" id="SSF47240">
    <property type="entry name" value="Ferritin-like"/>
    <property type="match status" value="1"/>
</dbReference>
<dbReference type="PROSITE" id="PS00368">
    <property type="entry name" value="RIBORED_SMALL"/>
    <property type="match status" value="1"/>
</dbReference>
<organism>
    <name type="scientific">Mesocricetus auratus</name>
    <name type="common">Golden hamster</name>
    <dbReference type="NCBI Taxonomy" id="10036"/>
    <lineage>
        <taxon>Eukaryota</taxon>
        <taxon>Metazoa</taxon>
        <taxon>Chordata</taxon>
        <taxon>Craniata</taxon>
        <taxon>Vertebrata</taxon>
        <taxon>Euteleostomi</taxon>
        <taxon>Mammalia</taxon>
        <taxon>Eutheria</taxon>
        <taxon>Euarchontoglires</taxon>
        <taxon>Glires</taxon>
        <taxon>Rodentia</taxon>
        <taxon>Myomorpha</taxon>
        <taxon>Muroidea</taxon>
        <taxon>Cricetidae</taxon>
        <taxon>Cricetinae</taxon>
        <taxon>Mesocricetus</taxon>
    </lineage>
</organism>
<accession>Q60561</accession>
<keyword id="KW-0963">Cytoplasm</keyword>
<keyword id="KW-0215">Deoxyribonucleotide synthesis</keyword>
<keyword id="KW-0408">Iron</keyword>
<keyword id="KW-0479">Metal-binding</keyword>
<keyword id="KW-0539">Nucleus</keyword>
<keyword id="KW-0560">Oxidoreductase</keyword>
<keyword id="KW-0597">Phosphoprotein</keyword>
<keyword id="KW-1185">Reference proteome</keyword>
<keyword id="KW-0832">Ubl conjugation</keyword>
<reference key="1">
    <citation type="journal article" date="1992" name="Biochim. Biophys. Acta">
        <title>cDNA sequence of the small subunit of the hamster ribonucleotide reductase.</title>
        <authorList>
            <person name="Chaudhuri M.M."/>
            <person name="Tonin P.N."/>
            <person name="Srinivasan P.R."/>
        </authorList>
    </citation>
    <scope>NUCLEOTIDE SEQUENCE [MRNA]</scope>
    <source>
        <tissue>Lung</tissue>
    </source>
</reference>
<gene>
    <name type="primary">RRM2</name>
</gene>
<comment type="function">
    <text evidence="1">Provides the precursors necessary for DNA synthesis. Catalyzes the biosynthesis of deoxyribonucleotides from the corresponding ribonucleotides (By similarity). Inhibits Wnt signaling (By similarity).</text>
</comment>
<comment type="catalytic activity">
    <reaction evidence="4">
        <text>a 2'-deoxyribonucleoside 5'-diphosphate + [thioredoxin]-disulfide + H2O = a ribonucleoside 5'-diphosphate + [thioredoxin]-dithiol</text>
        <dbReference type="Rhea" id="RHEA:23252"/>
        <dbReference type="Rhea" id="RHEA-COMP:10698"/>
        <dbReference type="Rhea" id="RHEA-COMP:10700"/>
        <dbReference type="ChEBI" id="CHEBI:15377"/>
        <dbReference type="ChEBI" id="CHEBI:29950"/>
        <dbReference type="ChEBI" id="CHEBI:50058"/>
        <dbReference type="ChEBI" id="CHEBI:57930"/>
        <dbReference type="ChEBI" id="CHEBI:73316"/>
        <dbReference type="EC" id="1.17.4.1"/>
    </reaction>
</comment>
<comment type="cofactor">
    <cofactor evidence="1">
        <name>Fe cation</name>
        <dbReference type="ChEBI" id="CHEBI:24875"/>
    </cofactor>
    <text evidence="1">Binds 2 iron ions per subunit.</text>
</comment>
<comment type="subunit">
    <text evidence="3">Heterodimer of a large and a small subunit. Interacts (via Cy motif and when phosphorylated at Thr-33) with CCNF; the interaction occurs exclusively in G2 and early M (By similarity).</text>
</comment>
<comment type="subcellular location">
    <subcellularLocation>
        <location evidence="3">Cytoplasm</location>
    </subcellularLocation>
    <subcellularLocation>
        <location evidence="3">Nucleus</location>
    </subcellularLocation>
    <text evidence="3">Localized to the cytoplasm in S phase cells. May localize to the nucleus in G2 phase cells.</text>
</comment>
<comment type="PTM">
    <text evidence="3">Phosphorylation on Ser-20 relieves the inhibitory effect on Wnt signaling (By similarity). Phosphorylated on Thr-33 by CDK1 and CDK2; predominantly in G2 and M phase (By similarity).</text>
</comment>
<comment type="PTM">
    <text evidence="3">Ubiquitinated by the SCF(CCNF) E3 ubiquitin-protein ligase complex; leading to its degradation by the proteasome.</text>
</comment>
<comment type="miscellaneous">
    <text>Two distinct regulatory sites have been defined: the specificity site, which controls substrate specificity, and the activity site which regulates overall catalytic activity. A substrate-binding catalytic site, located on M1, is formed only in the presence of the second subunit M2.</text>
</comment>
<comment type="similarity">
    <text evidence="5">Belongs to the ribonucleoside diphosphate reductase small chain family.</text>
</comment>
<sequence length="386" mass="44482">MFSVRVPLATITDQQQLQVSPLKALSLADKENTPPSLSATPVLASKVARRILQDVAEPESKVSTNPSVEDEPLLRENPRRFVVFPIEYHDIWKMYKKAEASFWTAEEVDLSKDIQHWEALKPDERHFISHVLAFFAASDGIVNENLVERFSQEVQVTEARCFYGFQIAMENIHSEMYSLLIDTYIKDSKEREYLFNAIETMPCVKKKADWALRWIGDKEATYGERVVAFAAVEGIFFSGSFASIFWLKKRGLMPGLTFSNELISRDEGLHCDFACLMFKHLVHKPSEQRVQEIITNAVRIEQEFLTEALPVKLIGMNCTLMKQYIEFVADRLMLELGFNKIFKVENPFDFMENISLEGKTNFFEKRVGEYQRMGVMSNSFTLDADF</sequence>
<protein>
    <recommendedName>
        <fullName>Ribonucleoside-diphosphate reductase subunit M2</fullName>
        <ecNumber>1.17.4.1</ecNumber>
    </recommendedName>
    <alternativeName>
        <fullName>Ribonucleotide reductase small chain</fullName>
    </alternativeName>
    <alternativeName>
        <fullName>Ribonucleotide reductase small subunit</fullName>
    </alternativeName>
</protein>
<feature type="chain" id="PRO_0000190449" description="Ribonucleoside-diphosphate reductase subunit M2">
    <location>
        <begin position="1"/>
        <end position="386"/>
    </location>
</feature>
<feature type="short sequence motif" description="Cy" evidence="3">
    <location>
        <begin position="49"/>
        <end position="51"/>
    </location>
</feature>
<feature type="active site" evidence="4">
    <location>
        <position position="177"/>
    </location>
</feature>
<feature type="binding site" evidence="4">
    <location>
        <position position="139"/>
    </location>
    <ligand>
        <name>Fe cation</name>
        <dbReference type="ChEBI" id="CHEBI:24875"/>
        <label>1</label>
    </ligand>
</feature>
<feature type="binding site" evidence="4">
    <location>
        <position position="170"/>
    </location>
    <ligand>
        <name>Fe cation</name>
        <dbReference type="ChEBI" id="CHEBI:24875"/>
        <label>1</label>
    </ligand>
</feature>
<feature type="binding site" evidence="1">
    <location>
        <position position="170"/>
    </location>
    <ligand>
        <name>Fe cation</name>
        <dbReference type="ChEBI" id="CHEBI:24875"/>
        <label>2</label>
    </ligand>
</feature>
<feature type="binding site" evidence="4">
    <location>
        <position position="173"/>
    </location>
    <ligand>
        <name>Fe cation</name>
        <dbReference type="ChEBI" id="CHEBI:24875"/>
        <label>1</label>
    </ligand>
</feature>
<feature type="binding site" evidence="1">
    <location>
        <position position="233"/>
    </location>
    <ligand>
        <name>Fe cation</name>
        <dbReference type="ChEBI" id="CHEBI:24875"/>
        <label>2</label>
    </ligand>
</feature>
<feature type="binding site" evidence="1">
    <location>
        <position position="267"/>
    </location>
    <ligand>
        <name>Fe cation</name>
        <dbReference type="ChEBI" id="CHEBI:24875"/>
        <label>2</label>
    </ligand>
</feature>
<feature type="binding site" evidence="1">
    <location>
        <position position="270"/>
    </location>
    <ligand>
        <name>Fe cation</name>
        <dbReference type="ChEBI" id="CHEBI:24875"/>
        <label>2</label>
    </ligand>
</feature>
<feature type="modified residue" description="Phosphoserine" evidence="2">
    <location>
        <position position="20"/>
    </location>
</feature>
<feature type="modified residue" description="Phosphothreonine" evidence="2">
    <location>
        <position position="33"/>
    </location>
</feature>
<name>RIR2_MESAU</name>
<evidence type="ECO:0000250" key="1"/>
<evidence type="ECO:0000250" key="2">
    <source>
        <dbReference type="UniProtKB" id="P11157"/>
    </source>
</evidence>
<evidence type="ECO:0000250" key="3">
    <source>
        <dbReference type="UniProtKB" id="P31350"/>
    </source>
</evidence>
<evidence type="ECO:0000255" key="4">
    <source>
        <dbReference type="PROSITE-ProRule" id="PRU10014"/>
    </source>
</evidence>
<evidence type="ECO:0000305" key="5"/>